<comment type="function">
    <text evidence="4 6 8">High-affinity potassium transporter. Can also transport rubidium and cesium (Ref.1). Is essential with AKT1 for high-affinity potassium uptake in roots during seedling establishment and postgermination growth under low potassium conditions (PubMed:20413648). Mediates potassium uptake by plant roots in response to low potassium conditions, by a calcium-, CBL-, and CIPK-dependent pathway. Positively regulated by the calcium sensors calcineurin B-like genes CBL1, CBL8, CBL9 and CBL10, and by phosphorylation by CIPK23 (PubMed:26474642).</text>
</comment>
<comment type="subunit">
    <text evidence="7">Interacts with ILK1.</text>
</comment>
<comment type="subcellular location">
    <subcellularLocation>
        <location evidence="9">Cell membrane</location>
        <topology evidence="9">Multi-pass membrane protein</topology>
    </subcellularLocation>
</comment>
<comment type="tissue specificity">
    <text evidence="8">Predominantly expressed in the roots.</text>
</comment>
<comment type="induction">
    <text evidence="3 8">Induced in both roots and shoots by potassium starvation (Ref.1). Down-regulated by salt stress in roots (PubMed:20028724).</text>
</comment>
<comment type="PTM">
    <text evidence="6">Phosphorylated at the N-terminus (amino acids 1-95) by CIPK23.</text>
</comment>
<comment type="similarity">
    <text evidence="9">Belongs to the HAK/KUP transporter (TC 2.A.72.3) family.</text>
</comment>
<comment type="sequence caution" evidence="9">
    <conflict type="erroneous gene model prediction">
        <sequence resource="EMBL-CDS" id="CAB40777"/>
    </conflict>
</comment>
<comment type="sequence caution" evidence="9">
    <conflict type="erroneous gene model prediction">
        <sequence resource="EMBL-CDS" id="CAB78384"/>
    </conflict>
</comment>
<organism>
    <name type="scientific">Arabidopsis thaliana</name>
    <name type="common">Mouse-ear cress</name>
    <dbReference type="NCBI Taxonomy" id="3702"/>
    <lineage>
        <taxon>Eukaryota</taxon>
        <taxon>Viridiplantae</taxon>
        <taxon>Streptophyta</taxon>
        <taxon>Embryophyta</taxon>
        <taxon>Tracheophyta</taxon>
        <taxon>Spermatophyta</taxon>
        <taxon>Magnoliopsida</taxon>
        <taxon>eudicotyledons</taxon>
        <taxon>Gunneridae</taxon>
        <taxon>Pentapetalae</taxon>
        <taxon>rosids</taxon>
        <taxon>malvids</taxon>
        <taxon>Brassicales</taxon>
        <taxon>Brassicaceae</taxon>
        <taxon>Camelineae</taxon>
        <taxon>Arabidopsis</taxon>
    </lineage>
</organism>
<keyword id="KW-1003">Cell membrane</keyword>
<keyword id="KW-0325">Glycoprotein</keyword>
<keyword id="KW-0406">Ion transport</keyword>
<keyword id="KW-0472">Membrane</keyword>
<keyword id="KW-0597">Phosphoprotein</keyword>
<keyword id="KW-0630">Potassium</keyword>
<keyword id="KW-0633">Potassium transport</keyword>
<keyword id="KW-1185">Reference proteome</keyword>
<keyword id="KW-0812">Transmembrane</keyword>
<keyword id="KW-1133">Transmembrane helix</keyword>
<keyword id="KW-0813">Transport</keyword>
<sequence>MDGEEHQIDGDEVNNHENKLNEKKKSWGKLYRPDSFIIEAGQTPTNTGRRSLMSWRTTMSLAFQSLGVVYGDIGTSPLYVYASTFTDGINDKDDVVGVLSLIIYTITLVALLKYVFIVLQANDNGEGGTFALYSLICRYAKMGLIPNQEPEDVELSNYTLELPTTQLRRAHMIKEKLENSKFAKIILFLVTIMGTSMVIGDGILTPSISVLSAVSGIKSLGQNTVVGVSVAILIVLFAFQRFGTDKVGFSFAPIILVWFTFLIGIGLFNLFKHDITVLKALNPLYIIYYFRRTGRQGWISLGGVFLCITGTEAMFADLGHFSVRAVQISFSCVAYPALVTIYCGQAAYLTKHTYNVSNTFYDSIPDPLYWPTFVVAVAASIIASQAMISGAFSVISQSLRMGCFPRVKVVHTSAKYEGQVYIPEINYLLMLACIAVTLAFRTTEKIGHAYGIAVVTVMVITTLMVTLIMLVIWKTNIVWIAIFLVVFGSIEMLYLSSVMYKFTSGGYLPLTITVVLMAMMAIWQYVHVLKYRYELREKISRENAIQMATSPDVNRVPGIGLFYTELVNGITPLFSHYISNLSSVHSVFVLISIKTLPVNRVTSSERFFFRYVGPKDSGMFRCVVRYGYKEDIEEPDEFERHFVYYLKEFIHHEHFMSGGGGEVDETDKEEEPNAETTVVPSSNYVPSSGRIGSAHSSSSDKIRSGRVVQVQSVEDQTELVEKAREKGMVYLMGETEITAEKESSLFKKFIVNHAYNFLKKNCREGDKALAIPRSKLLKVGMTYEL</sequence>
<proteinExistence type="evidence at protein level"/>
<accession>Q9M7K4</accession>
<accession>Q9T0L3</accession>
<name>POT5_ARATH</name>
<protein>
    <recommendedName>
        <fullName>Potassium transporter 5</fullName>
        <shortName>AtHAK1</shortName>
        <shortName>AtHAK5</shortName>
        <shortName>AtPOT5</shortName>
    </recommendedName>
</protein>
<feature type="chain" id="PRO_0000209081" description="Potassium transporter 5">
    <location>
        <begin position="1"/>
        <end position="785"/>
    </location>
</feature>
<feature type="topological domain" description="Cytoplasmic" evidence="1">
    <location>
        <begin position="1"/>
        <end position="60"/>
    </location>
</feature>
<feature type="transmembrane region" description="Helical" evidence="1">
    <location>
        <begin position="61"/>
        <end position="81"/>
    </location>
</feature>
<feature type="topological domain" description="Extracellular" evidence="1">
    <location>
        <begin position="82"/>
        <end position="97"/>
    </location>
</feature>
<feature type="transmembrane region" description="Helical" evidence="1">
    <location>
        <begin position="98"/>
        <end position="118"/>
    </location>
</feature>
<feature type="topological domain" description="Cytoplasmic" evidence="1">
    <location>
        <begin position="119"/>
        <end position="184"/>
    </location>
</feature>
<feature type="transmembrane region" description="Helical" evidence="1">
    <location>
        <begin position="185"/>
        <end position="205"/>
    </location>
</feature>
<feature type="topological domain" description="Extracellular" evidence="1">
    <location>
        <begin position="206"/>
        <end position="218"/>
    </location>
</feature>
<feature type="transmembrane region" description="Helical" evidence="1">
    <location>
        <begin position="219"/>
        <end position="239"/>
    </location>
</feature>
<feature type="topological domain" description="Cytoplasmic" evidence="1">
    <location>
        <begin position="240"/>
        <end position="247"/>
    </location>
</feature>
<feature type="transmembrane region" description="Helical" evidence="1">
    <location>
        <begin position="248"/>
        <end position="268"/>
    </location>
</feature>
<feature type="topological domain" description="Extracellular" evidence="1">
    <location>
        <begin position="269"/>
        <end position="297"/>
    </location>
</feature>
<feature type="transmembrane region" description="Helical" evidence="1">
    <location>
        <begin position="298"/>
        <end position="318"/>
    </location>
</feature>
<feature type="topological domain" description="Cytoplasmic" evidence="1">
    <location>
        <begin position="319"/>
        <end position="327"/>
    </location>
</feature>
<feature type="transmembrane region" description="Helical" evidence="1">
    <location>
        <begin position="328"/>
        <end position="348"/>
    </location>
</feature>
<feature type="topological domain" description="Extracellular" evidence="1">
    <location>
        <begin position="349"/>
        <end position="367"/>
    </location>
</feature>
<feature type="transmembrane region" description="Helical" evidence="1">
    <location>
        <begin position="368"/>
        <end position="388"/>
    </location>
</feature>
<feature type="topological domain" description="Cytoplasmic" evidence="1">
    <location>
        <begin position="389"/>
        <end position="419"/>
    </location>
</feature>
<feature type="transmembrane region" description="Helical" evidence="1">
    <location>
        <begin position="420"/>
        <end position="440"/>
    </location>
</feature>
<feature type="topological domain" description="Extracellular" evidence="1">
    <location>
        <begin position="441"/>
        <end position="451"/>
    </location>
</feature>
<feature type="transmembrane region" description="Helical" evidence="1">
    <location>
        <begin position="452"/>
        <end position="472"/>
    </location>
</feature>
<feature type="topological domain" description="Cytoplasmic" evidence="1">
    <location>
        <begin position="473"/>
        <end position="476"/>
    </location>
</feature>
<feature type="transmembrane region" description="Helical" evidence="1">
    <location>
        <begin position="477"/>
        <end position="497"/>
    </location>
</feature>
<feature type="topological domain" description="Extracellular" evidence="1">
    <location>
        <begin position="498"/>
        <end position="501"/>
    </location>
</feature>
<feature type="transmembrane region" description="Helical" evidence="1">
    <location>
        <begin position="502"/>
        <end position="522"/>
    </location>
</feature>
<feature type="topological domain" description="Cytoplasmic" evidence="1">
    <location>
        <begin position="523"/>
        <end position="785"/>
    </location>
</feature>
<feature type="region of interest" description="Disordered" evidence="2">
    <location>
        <begin position="660"/>
        <end position="699"/>
    </location>
</feature>
<feature type="compositionally biased region" description="Acidic residues" evidence="2">
    <location>
        <begin position="662"/>
        <end position="673"/>
    </location>
</feature>
<feature type="compositionally biased region" description="Polar residues" evidence="2">
    <location>
        <begin position="674"/>
        <end position="686"/>
    </location>
</feature>
<feature type="compositionally biased region" description="Low complexity" evidence="2">
    <location>
        <begin position="687"/>
        <end position="697"/>
    </location>
</feature>
<feature type="modified residue" description="Phosphoserine" evidence="10">
    <location>
        <position position="35"/>
    </location>
</feature>
<feature type="glycosylation site" description="N-linked (GlcNAc...) asparagine" evidence="1">
    <location>
        <position position="355"/>
    </location>
</feature>
<feature type="mutagenesis site" description="Increases potassium transport and selectivity; over sodium and cesium." evidence="5">
    <original>F</original>
    <variation>S</variation>
    <location>
        <position position="130"/>
    </location>
</feature>
<feature type="mutagenesis site" description="In hak5-1; increases transport." evidence="8">
    <original>L</original>
    <variation>H</variation>
    <location>
        <position position="776"/>
    </location>
</feature>
<dbReference type="EMBL" id="AF129478">
    <property type="protein sequence ID" value="AAF36490.1"/>
    <property type="molecule type" value="mRNA"/>
</dbReference>
<dbReference type="EMBL" id="AL049608">
    <property type="protein sequence ID" value="CAB40777.1"/>
    <property type="status" value="ALT_SEQ"/>
    <property type="molecule type" value="Genomic_DNA"/>
</dbReference>
<dbReference type="EMBL" id="AL161536">
    <property type="protein sequence ID" value="CAB78384.1"/>
    <property type="status" value="ALT_SEQ"/>
    <property type="molecule type" value="Genomic_DNA"/>
</dbReference>
<dbReference type="EMBL" id="CP002687">
    <property type="protein sequence ID" value="AEE83277.1"/>
    <property type="molecule type" value="Genomic_DNA"/>
</dbReference>
<dbReference type="PIR" id="T06299">
    <property type="entry name" value="T06299"/>
</dbReference>
<dbReference type="RefSeq" id="NP_567404.1">
    <property type="nucleotide sequence ID" value="NM_117416.3"/>
</dbReference>
<dbReference type="FunCoup" id="Q9M7K4">
    <property type="interactions" value="13"/>
</dbReference>
<dbReference type="STRING" id="3702.Q9M7K4"/>
<dbReference type="TCDB" id="2.A.72.3.9">
    <property type="family name" value="the k(+) uptake permease (kup) family"/>
</dbReference>
<dbReference type="GlyCosmos" id="Q9M7K4">
    <property type="glycosylation" value="1 site, No reported glycans"/>
</dbReference>
<dbReference type="GlyGen" id="Q9M7K4">
    <property type="glycosylation" value="1 site"/>
</dbReference>
<dbReference type="iPTMnet" id="Q9M7K4"/>
<dbReference type="PaxDb" id="3702-AT4G13420.1"/>
<dbReference type="ProteomicsDB" id="250607"/>
<dbReference type="EnsemblPlants" id="AT4G13420.1">
    <property type="protein sequence ID" value="AT4G13420.1"/>
    <property type="gene ID" value="AT4G13420"/>
</dbReference>
<dbReference type="GeneID" id="826973"/>
<dbReference type="Gramene" id="AT4G13420.1">
    <property type="protein sequence ID" value="AT4G13420.1"/>
    <property type="gene ID" value="AT4G13420"/>
</dbReference>
<dbReference type="KEGG" id="ath:AT4G13420"/>
<dbReference type="Araport" id="AT4G13420"/>
<dbReference type="TAIR" id="AT4G13420">
    <property type="gene designation" value="HAK5"/>
</dbReference>
<dbReference type="eggNOG" id="ENOG502QPSA">
    <property type="taxonomic scope" value="Eukaryota"/>
</dbReference>
<dbReference type="HOGENOM" id="CLU_008142_2_0_1"/>
<dbReference type="InParanoid" id="Q9M7K4"/>
<dbReference type="OMA" id="HWIKKKM"/>
<dbReference type="PhylomeDB" id="Q9M7K4"/>
<dbReference type="PRO" id="PR:Q9M7K4"/>
<dbReference type="Proteomes" id="UP000006548">
    <property type="component" value="Chromosome 4"/>
</dbReference>
<dbReference type="ExpressionAtlas" id="Q9M7K4">
    <property type="expression patterns" value="baseline and differential"/>
</dbReference>
<dbReference type="GO" id="GO:0005886">
    <property type="term" value="C:plasma membrane"/>
    <property type="evidence" value="ECO:0007669"/>
    <property type="project" value="UniProtKB-SubCell"/>
</dbReference>
<dbReference type="GO" id="GO:0015079">
    <property type="term" value="F:potassium ion transmembrane transporter activity"/>
    <property type="evidence" value="ECO:0000315"/>
    <property type="project" value="TAIR"/>
</dbReference>
<dbReference type="GO" id="GO:0009674">
    <property type="term" value="F:potassium:sodium symporter activity"/>
    <property type="evidence" value="ECO:0000315"/>
    <property type="project" value="TAIR"/>
</dbReference>
<dbReference type="GO" id="GO:1990573">
    <property type="term" value="P:potassium ion import across plasma membrane"/>
    <property type="evidence" value="ECO:0000314"/>
    <property type="project" value="TAIR"/>
</dbReference>
<dbReference type="GO" id="GO:0006813">
    <property type="term" value="P:potassium ion transport"/>
    <property type="evidence" value="ECO:0000315"/>
    <property type="project" value="TAIR"/>
</dbReference>
<dbReference type="InterPro" id="IPR003855">
    <property type="entry name" value="K+_transporter"/>
</dbReference>
<dbReference type="InterPro" id="IPR053952">
    <property type="entry name" value="K_trans_C"/>
</dbReference>
<dbReference type="InterPro" id="IPR053951">
    <property type="entry name" value="K_trans_N"/>
</dbReference>
<dbReference type="NCBIfam" id="TIGR00794">
    <property type="entry name" value="kup"/>
    <property type="match status" value="1"/>
</dbReference>
<dbReference type="PANTHER" id="PTHR30540">
    <property type="entry name" value="OSMOTIC STRESS POTASSIUM TRANSPORTER"/>
    <property type="match status" value="1"/>
</dbReference>
<dbReference type="PANTHER" id="PTHR30540:SF94">
    <property type="entry name" value="POTASSIUM TRANSPORTER 5"/>
    <property type="match status" value="1"/>
</dbReference>
<dbReference type="Pfam" id="PF02705">
    <property type="entry name" value="K_trans"/>
    <property type="match status" value="1"/>
</dbReference>
<dbReference type="Pfam" id="PF22776">
    <property type="entry name" value="K_trans_C"/>
    <property type="match status" value="1"/>
</dbReference>
<evidence type="ECO:0000255" key="1"/>
<evidence type="ECO:0000256" key="2">
    <source>
        <dbReference type="SAM" id="MobiDB-lite"/>
    </source>
</evidence>
<evidence type="ECO:0000269" key="3">
    <source>
    </source>
</evidence>
<evidence type="ECO:0000269" key="4">
    <source>
    </source>
</evidence>
<evidence type="ECO:0000269" key="5">
    <source>
    </source>
</evidence>
<evidence type="ECO:0000269" key="6">
    <source>
    </source>
</evidence>
<evidence type="ECO:0000269" key="7">
    <source>
    </source>
</evidence>
<evidence type="ECO:0000269" key="8">
    <source ref="1"/>
</evidence>
<evidence type="ECO:0000305" key="9"/>
<evidence type="ECO:0007744" key="10">
    <source>
    </source>
</evidence>
<gene>
    <name type="primary">POT5</name>
    <name type="synonym">HAK5</name>
    <name type="ordered locus">At4g13420</name>
    <name type="ORF">T9E8.160</name>
</gene>
<reference key="1">
    <citation type="journal article" date="2000" name="Physiol. Plantarum">
        <title>Cloning of Arabidopsis and barley cDNAs encoding HAK potassium transporters in root and shoot cells.</title>
        <authorList>
            <person name="Rubio F."/>
            <person name="Santa-Maria G.E."/>
            <person name="Rodriguez-Navarro A."/>
        </authorList>
    </citation>
    <scope>NUCLEOTIDE SEQUENCE [MRNA]</scope>
    <scope>FUNCTION</scope>
    <scope>TISSUE SPECIFICITY</scope>
    <scope>INDUCTION</scope>
    <scope>MUTANT HAK5-1</scope>
    <source>
        <strain>cv. Columbia</strain>
    </source>
</reference>
<reference key="2">
    <citation type="journal article" date="1999" name="Nature">
        <title>Sequence and analysis of chromosome 4 of the plant Arabidopsis thaliana.</title>
        <authorList>
            <person name="Mayer K.F.X."/>
            <person name="Schueller C."/>
            <person name="Wambutt R."/>
            <person name="Murphy G."/>
            <person name="Volckaert G."/>
            <person name="Pohl T."/>
            <person name="Duesterhoeft A."/>
            <person name="Stiekema W."/>
            <person name="Entian K.-D."/>
            <person name="Terryn N."/>
            <person name="Harris B."/>
            <person name="Ansorge W."/>
            <person name="Brandt P."/>
            <person name="Grivell L.A."/>
            <person name="Rieger M."/>
            <person name="Weichselgartner M."/>
            <person name="de Simone V."/>
            <person name="Obermaier B."/>
            <person name="Mache R."/>
            <person name="Mueller M."/>
            <person name="Kreis M."/>
            <person name="Delseny M."/>
            <person name="Puigdomenech P."/>
            <person name="Watson M."/>
            <person name="Schmidtheini T."/>
            <person name="Reichert B."/>
            <person name="Portetelle D."/>
            <person name="Perez-Alonso M."/>
            <person name="Boutry M."/>
            <person name="Bancroft I."/>
            <person name="Vos P."/>
            <person name="Hoheisel J."/>
            <person name="Zimmermann W."/>
            <person name="Wedler H."/>
            <person name="Ridley P."/>
            <person name="Langham S.-A."/>
            <person name="McCullagh B."/>
            <person name="Bilham L."/>
            <person name="Robben J."/>
            <person name="van der Schueren J."/>
            <person name="Grymonprez B."/>
            <person name="Chuang Y.-J."/>
            <person name="Vandenbussche F."/>
            <person name="Braeken M."/>
            <person name="Weltjens I."/>
            <person name="Voet M."/>
            <person name="Bastiaens I."/>
            <person name="Aert R."/>
            <person name="Defoor E."/>
            <person name="Weitzenegger T."/>
            <person name="Bothe G."/>
            <person name="Ramsperger U."/>
            <person name="Hilbert H."/>
            <person name="Braun M."/>
            <person name="Holzer E."/>
            <person name="Brandt A."/>
            <person name="Peters S."/>
            <person name="van Staveren M."/>
            <person name="Dirkse W."/>
            <person name="Mooijman P."/>
            <person name="Klein Lankhorst R."/>
            <person name="Rose M."/>
            <person name="Hauf J."/>
            <person name="Koetter P."/>
            <person name="Berneiser S."/>
            <person name="Hempel S."/>
            <person name="Feldpausch M."/>
            <person name="Lamberth S."/>
            <person name="Van den Daele H."/>
            <person name="De Keyser A."/>
            <person name="Buysshaert C."/>
            <person name="Gielen J."/>
            <person name="Villarroel R."/>
            <person name="De Clercq R."/>
            <person name="van Montagu M."/>
            <person name="Rogers J."/>
            <person name="Cronin A."/>
            <person name="Quail M.A."/>
            <person name="Bray-Allen S."/>
            <person name="Clark L."/>
            <person name="Doggett J."/>
            <person name="Hall S."/>
            <person name="Kay M."/>
            <person name="Lennard N."/>
            <person name="McLay K."/>
            <person name="Mayes R."/>
            <person name="Pettett A."/>
            <person name="Rajandream M.A."/>
            <person name="Lyne M."/>
            <person name="Benes V."/>
            <person name="Rechmann S."/>
            <person name="Borkova D."/>
            <person name="Bloecker H."/>
            <person name="Scharfe M."/>
            <person name="Grimm M."/>
            <person name="Loehnert T.-H."/>
            <person name="Dose S."/>
            <person name="de Haan M."/>
            <person name="Maarse A.C."/>
            <person name="Schaefer M."/>
            <person name="Mueller-Auer S."/>
            <person name="Gabel C."/>
            <person name="Fuchs M."/>
            <person name="Fartmann B."/>
            <person name="Granderath K."/>
            <person name="Dauner D."/>
            <person name="Herzl A."/>
            <person name="Neumann S."/>
            <person name="Argiriou A."/>
            <person name="Vitale D."/>
            <person name="Liguori R."/>
            <person name="Piravandi E."/>
            <person name="Massenet O."/>
            <person name="Quigley F."/>
            <person name="Clabauld G."/>
            <person name="Muendlein A."/>
            <person name="Felber R."/>
            <person name="Schnabl S."/>
            <person name="Hiller R."/>
            <person name="Schmidt W."/>
            <person name="Lecharny A."/>
            <person name="Aubourg S."/>
            <person name="Chefdor F."/>
            <person name="Cooke R."/>
            <person name="Berger C."/>
            <person name="Monfort A."/>
            <person name="Casacuberta E."/>
            <person name="Gibbons T."/>
            <person name="Weber N."/>
            <person name="Vandenbol M."/>
            <person name="Bargues M."/>
            <person name="Terol J."/>
            <person name="Torres A."/>
            <person name="Perez-Perez A."/>
            <person name="Purnelle B."/>
            <person name="Bent E."/>
            <person name="Johnson S."/>
            <person name="Tacon D."/>
            <person name="Jesse T."/>
            <person name="Heijnen L."/>
            <person name="Schwarz S."/>
            <person name="Scholler P."/>
            <person name="Heber S."/>
            <person name="Francs P."/>
            <person name="Bielke C."/>
            <person name="Frishman D."/>
            <person name="Haase D."/>
            <person name="Lemcke K."/>
            <person name="Mewes H.-W."/>
            <person name="Stocker S."/>
            <person name="Zaccaria P."/>
            <person name="Bevan M."/>
            <person name="Wilson R.K."/>
            <person name="de la Bastide M."/>
            <person name="Habermann K."/>
            <person name="Parnell L."/>
            <person name="Dedhia N."/>
            <person name="Gnoj L."/>
            <person name="Schutz K."/>
            <person name="Huang E."/>
            <person name="Spiegel L."/>
            <person name="Sekhon M."/>
            <person name="Murray J."/>
            <person name="Sheet P."/>
            <person name="Cordes M."/>
            <person name="Abu-Threideh J."/>
            <person name="Stoneking T."/>
            <person name="Kalicki J."/>
            <person name="Graves T."/>
            <person name="Harmon G."/>
            <person name="Edwards J."/>
            <person name="Latreille P."/>
            <person name="Courtney L."/>
            <person name="Cloud J."/>
            <person name="Abbott A."/>
            <person name="Scott K."/>
            <person name="Johnson D."/>
            <person name="Minx P."/>
            <person name="Bentley D."/>
            <person name="Fulton B."/>
            <person name="Miller N."/>
            <person name="Greco T."/>
            <person name="Kemp K."/>
            <person name="Kramer J."/>
            <person name="Fulton L."/>
            <person name="Mardis E."/>
            <person name="Dante M."/>
            <person name="Pepin K."/>
            <person name="Hillier L.W."/>
            <person name="Nelson J."/>
            <person name="Spieth J."/>
            <person name="Ryan E."/>
            <person name="Andrews S."/>
            <person name="Geisel C."/>
            <person name="Layman D."/>
            <person name="Du H."/>
            <person name="Ali J."/>
            <person name="Berghoff A."/>
            <person name="Jones K."/>
            <person name="Drone K."/>
            <person name="Cotton M."/>
            <person name="Joshu C."/>
            <person name="Antonoiu B."/>
            <person name="Zidanic M."/>
            <person name="Strong C."/>
            <person name="Sun H."/>
            <person name="Lamar B."/>
            <person name="Yordan C."/>
            <person name="Ma P."/>
            <person name="Zhong J."/>
            <person name="Preston R."/>
            <person name="Vil D."/>
            <person name="Shekher M."/>
            <person name="Matero A."/>
            <person name="Shah R."/>
            <person name="Swaby I.K."/>
            <person name="O'Shaughnessy A."/>
            <person name="Rodriguez M."/>
            <person name="Hoffman J."/>
            <person name="Till S."/>
            <person name="Granat S."/>
            <person name="Shohdy N."/>
            <person name="Hasegawa A."/>
            <person name="Hameed A."/>
            <person name="Lodhi M."/>
            <person name="Johnson A."/>
            <person name="Chen E."/>
            <person name="Marra M.A."/>
            <person name="Martienssen R."/>
            <person name="McCombie W.R."/>
        </authorList>
    </citation>
    <scope>NUCLEOTIDE SEQUENCE [LARGE SCALE GENOMIC DNA]</scope>
    <source>
        <strain>cv. Columbia</strain>
    </source>
</reference>
<reference key="3">
    <citation type="journal article" date="2017" name="Plant J.">
        <title>Araport11: a complete reannotation of the Arabidopsis thaliana reference genome.</title>
        <authorList>
            <person name="Cheng C.Y."/>
            <person name="Krishnakumar V."/>
            <person name="Chan A.P."/>
            <person name="Thibaud-Nissen F."/>
            <person name="Schobel S."/>
            <person name="Town C.D."/>
        </authorList>
    </citation>
    <scope>GENOME REANNOTATION</scope>
    <source>
        <strain>cv. Columbia</strain>
    </source>
</reference>
<reference key="4">
    <citation type="journal article" date="2001" name="Plant Physiol.">
        <title>Phylogenetic relationships within cation transporter families of Arabidopsis.</title>
        <authorList>
            <person name="Maeser P."/>
            <person name="Thomine S."/>
            <person name="Schroeder J.I."/>
            <person name="Ward J.M."/>
            <person name="Hirschi K."/>
            <person name="Sze H."/>
            <person name="Talke I.N."/>
            <person name="Amtmann A."/>
            <person name="Maathuis F.J.M."/>
            <person name="Sanders D."/>
            <person name="Harper J.F."/>
            <person name="Tchieu J."/>
            <person name="Gribskov M."/>
            <person name="Persans M.W."/>
            <person name="Salt D.E."/>
            <person name="Kim S.A."/>
            <person name="Guerinot M.L."/>
        </authorList>
    </citation>
    <scope>GENE FAMILY</scope>
    <scope>NOMENCLATURE</scope>
</reference>
<reference key="5">
    <citation type="journal article" date="2009" name="J. Proteomics">
        <title>Phosphoproteomic analysis of nuclei-enriched fractions from Arabidopsis thaliana.</title>
        <authorList>
            <person name="Jones A.M.E."/>
            <person name="MacLean D."/>
            <person name="Studholme D.J."/>
            <person name="Serna-Sanz A."/>
            <person name="Andreasson E."/>
            <person name="Rathjen J.P."/>
            <person name="Peck S.C."/>
        </authorList>
    </citation>
    <scope>PHOSPHORYLATION [LARGE SCALE ANALYSIS] AT SER-35</scope>
    <scope>IDENTIFICATION BY MASS SPECTROMETRY [LARGE SCALE ANALYSIS]</scope>
    <source>
        <strain>cv. Columbia</strain>
    </source>
</reference>
<reference key="6">
    <citation type="journal article" date="2010" name="Mol. Plant">
        <title>The Arabidopsis thaliana HAK5 K+ transporter is required for plant growth and K+ acquisition from low K+ solutions under saline conditions.</title>
        <authorList>
            <person name="Nieves-Cordones M."/>
            <person name="Aleman F."/>
            <person name="Martinez V."/>
            <person name="Rubio F."/>
        </authorList>
    </citation>
    <scope>INDUCTION</scope>
</reference>
<reference key="7">
    <citation type="journal article" date="2010" name="Plant Physiol.">
        <title>High-affinity K(+) transport in Arabidopsis: AtHAK5 and AKT1 are vital for seedling establishment and postgermination growth under low-potassium conditions.</title>
        <authorList>
            <person name="Pyo Y.J."/>
            <person name="Gierth M."/>
            <person name="Schroeder J.I."/>
            <person name="Cho M.H."/>
        </authorList>
    </citation>
    <scope>FUNCTION</scope>
</reference>
<reference key="8">
    <citation type="journal article" date="2014" name="Front. Plant Sci.">
        <title>The F130S point mutation in the Arabidopsis high-affinity K(+) transporter AtHAK5 increases K(+) over Na(+) and Cs(+) selectivity and confers Na(+) and Cs(+) tolerance to yeast under heterologous expression.</title>
        <authorList>
            <person name="Aleman F."/>
            <person name="Caballero F."/>
            <person name="Rodenas R."/>
            <person name="Rivero R.M."/>
            <person name="Martinez V."/>
            <person name="Rubio F."/>
        </authorList>
    </citation>
    <scope>MUTAGENESIS OF PHE-130</scope>
</reference>
<reference key="9">
    <citation type="journal article" date="2015" name="Plant Physiol.">
        <title>The CBL-interacting protein kinase CIPK23 regulates HAK5-mediated high-affinity K+ uptake in Arabidopsis roots.</title>
        <authorList>
            <person name="Ragel P."/>
            <person name="Rodenas R."/>
            <person name="Garcia-Martin E."/>
            <person name="Andres Z."/>
            <person name="Villalta I."/>
            <person name="Nieves-Cordones M."/>
            <person name="Rivero R.M."/>
            <person name="Martinez V."/>
            <person name="Pardo J.M."/>
            <person name="Quintero F.J."/>
            <person name="Rubio F."/>
        </authorList>
    </citation>
    <scope>FUNCTION</scope>
    <scope>PHOSPHORYLATION</scope>
</reference>
<reference key="10">
    <citation type="journal article" date="2016" name="Plant Physiol.">
        <title>The Raf-like kinase ILK1 and the high affinity K+ transporter HAK5 are required for innate immunity and abiotic stress response.</title>
        <authorList>
            <person name="Brauer E.K."/>
            <person name="Ahsan N."/>
            <person name="Dale R."/>
            <person name="Kato N."/>
            <person name="Coluccio A.E."/>
            <person name="Pineros M.A."/>
            <person name="Kochian L.V."/>
            <person name="Thelen J.J."/>
            <person name="Popescu S.C."/>
        </authorList>
    </citation>
    <scope>INTERACTION WITH ILK1</scope>
</reference>